<proteinExistence type="inferred from homology"/>
<protein>
    <recommendedName>
        <fullName>Protein Wnt-7b</fullName>
    </recommendedName>
</protein>
<evidence type="ECO:0000250" key="1">
    <source>
        <dbReference type="UniProtKB" id="P27467"/>
    </source>
</evidence>
<evidence type="ECO:0000250" key="2">
    <source>
        <dbReference type="UniProtKB" id="P28026"/>
    </source>
</evidence>
<evidence type="ECO:0000250" key="3">
    <source>
        <dbReference type="UniProtKB" id="P28047"/>
    </source>
</evidence>
<evidence type="ECO:0000250" key="4">
    <source>
        <dbReference type="UniProtKB" id="P56704"/>
    </source>
</evidence>
<evidence type="ECO:0000250" key="5">
    <source>
        <dbReference type="UniProtKB" id="P56706"/>
    </source>
</evidence>
<evidence type="ECO:0000255" key="6"/>
<evidence type="ECO:0000305" key="7"/>
<gene>
    <name type="primary">WNT-7B</name>
</gene>
<comment type="function">
    <text evidence="3 5">Ligand for members of the frizzled family of seven transmembrane receptors that functions in the canonical Wnt/beta-catenin signaling pathway (By similarity). Required for normal fusion of the chorion and the allantois during placenta development (By similarity). Required for central nervous system (CNS) angiogenesis and blood-brain barrier regulation (By similarity).</text>
</comment>
<comment type="subcellular location">
    <subcellularLocation>
        <location evidence="5">Secreted</location>
        <location evidence="5">Extracellular space</location>
        <location evidence="5">Extracellular matrix</location>
    </subcellularLocation>
    <subcellularLocation>
        <location evidence="5">Secreted</location>
    </subcellularLocation>
</comment>
<comment type="PTM">
    <text evidence="1 4">Palmitoleoylation is required for efficient binding to frizzled receptors. Depalmitoleoylation leads to Wnt signaling pathway inhibition.</text>
</comment>
<comment type="similarity">
    <text evidence="7">Belongs to the Wnt family.</text>
</comment>
<organism>
    <name type="scientific">Alopias vulpinus</name>
    <name type="common">Common thresher shark</name>
    <name type="synonym">Squalus vulpinus</name>
    <dbReference type="NCBI Taxonomy" id="7852"/>
    <lineage>
        <taxon>Eukaryota</taxon>
        <taxon>Metazoa</taxon>
        <taxon>Chordata</taxon>
        <taxon>Craniata</taxon>
        <taxon>Vertebrata</taxon>
        <taxon>Chondrichthyes</taxon>
        <taxon>Elasmobranchii</taxon>
        <taxon>Galeomorphii</taxon>
        <taxon>Galeoidea</taxon>
        <taxon>Lamniformes</taxon>
        <taxon>Alopiidae</taxon>
        <taxon>Alopias</taxon>
    </lineage>
</organism>
<name>WNT7B_ALOVU</name>
<keyword id="KW-0217">Developmental protein</keyword>
<keyword id="KW-1015">Disulfide bond</keyword>
<keyword id="KW-0272">Extracellular matrix</keyword>
<keyword id="KW-0325">Glycoprotein</keyword>
<keyword id="KW-0449">Lipoprotein</keyword>
<keyword id="KW-0964">Secreted</keyword>
<keyword id="KW-0879">Wnt signaling pathway</keyword>
<dbReference type="EMBL" id="M91257">
    <property type="protein sequence ID" value="AAA48543.1"/>
    <property type="molecule type" value="Genomic_DNA"/>
</dbReference>
<dbReference type="SMR" id="P28106"/>
<dbReference type="GlyCosmos" id="P28106">
    <property type="glycosylation" value="1 site, No reported glycans"/>
</dbReference>
<dbReference type="GO" id="GO:0005615">
    <property type="term" value="C:extracellular space"/>
    <property type="evidence" value="ECO:0007669"/>
    <property type="project" value="TreeGrafter"/>
</dbReference>
<dbReference type="GO" id="GO:0005125">
    <property type="term" value="F:cytokine activity"/>
    <property type="evidence" value="ECO:0007669"/>
    <property type="project" value="TreeGrafter"/>
</dbReference>
<dbReference type="GO" id="GO:0005109">
    <property type="term" value="F:frizzled binding"/>
    <property type="evidence" value="ECO:0007669"/>
    <property type="project" value="TreeGrafter"/>
</dbReference>
<dbReference type="GO" id="GO:0060070">
    <property type="term" value="P:canonical Wnt signaling pathway"/>
    <property type="evidence" value="ECO:0007669"/>
    <property type="project" value="TreeGrafter"/>
</dbReference>
<dbReference type="GO" id="GO:0045165">
    <property type="term" value="P:cell fate commitment"/>
    <property type="evidence" value="ECO:0007669"/>
    <property type="project" value="TreeGrafter"/>
</dbReference>
<dbReference type="GO" id="GO:0030182">
    <property type="term" value="P:neuron differentiation"/>
    <property type="evidence" value="ECO:0007669"/>
    <property type="project" value="TreeGrafter"/>
</dbReference>
<dbReference type="GO" id="GO:0046330">
    <property type="term" value="P:positive regulation of JNK cascade"/>
    <property type="evidence" value="ECO:0007669"/>
    <property type="project" value="TreeGrafter"/>
</dbReference>
<dbReference type="Gene3D" id="3.30.2460.20">
    <property type="match status" value="1"/>
</dbReference>
<dbReference type="InterPro" id="IPR005817">
    <property type="entry name" value="Wnt"/>
</dbReference>
<dbReference type="InterPro" id="IPR043158">
    <property type="entry name" value="Wnt_C"/>
</dbReference>
<dbReference type="PANTHER" id="PTHR12027:SF112">
    <property type="entry name" value="PROTEIN WNT-2"/>
    <property type="match status" value="1"/>
</dbReference>
<dbReference type="PANTHER" id="PTHR12027">
    <property type="entry name" value="WNT RELATED"/>
    <property type="match status" value="1"/>
</dbReference>
<dbReference type="Pfam" id="PF00110">
    <property type="entry name" value="wnt"/>
    <property type="match status" value="1"/>
</dbReference>
<dbReference type="SMART" id="SM00097">
    <property type="entry name" value="WNT1"/>
    <property type="match status" value="1"/>
</dbReference>
<feature type="chain" id="PRO_0000200650" description="Protein Wnt-7b">
    <location>
        <begin position="1" status="less than"/>
        <end position="123" status="greater than"/>
    </location>
</feature>
<feature type="region of interest" description="Disordered linker" evidence="5">
    <location>
        <begin position="33"/>
        <end position="61"/>
    </location>
</feature>
<feature type="lipid moiety-binding region" description="O-palmitoleoyl serine; by PORCN" evidence="4">
    <location>
        <position position="1"/>
    </location>
</feature>
<feature type="glycosylation site" description="N-linked (GlcNAc...) asparagine" evidence="6">
    <location>
        <position position="90"/>
    </location>
</feature>
<feature type="disulfide bond" evidence="2">
    <location>
        <begin position="89"/>
        <end position="104"/>
    </location>
</feature>
<feature type="non-terminal residue">
    <location>
        <position position="1"/>
    </location>
</feature>
<feature type="non-terminal residue">
    <location>
        <position position="123"/>
    </location>
</feature>
<reference key="1">
    <citation type="journal article" date="1992" name="Proc. Natl. Acad. Sci. U.S.A.">
        <title>Diversification of the Wnt gene family on the ancestral lineage of vertebrates.</title>
        <authorList>
            <person name="Sidow A."/>
        </authorList>
    </citation>
    <scope>NUCLEOTIDE SEQUENCE [GENOMIC DNA]</scope>
</reference>
<accession>P28106</accession>
<sequence length="123" mass="14153">SGSCTTKTCWTTLPKFREIGYILKEKYSEAVHVEAVRATRLRQPTFLKIKKPRTYRKPMVTDLVYIERSPNYCEEDSSTGSVGTQGRLCNRTSHHGDGCDLMCCGRGYNTHQYTKVWQCNCKF</sequence>